<keyword id="KW-0027">Amidation</keyword>
<keyword id="KW-0878">Amphibian defense peptide</keyword>
<keyword id="KW-0929">Antimicrobial</keyword>
<keyword id="KW-0903">Direct protein sequencing</keyword>
<keyword id="KW-0391">Immunity</keyword>
<keyword id="KW-0399">Innate immunity</keyword>
<keyword id="KW-0582">Pharmaceutical</keyword>
<keyword id="KW-0964">Secreted</keyword>
<evidence type="ECO:0000269" key="1">
    <source>
    </source>
</evidence>
<evidence type="ECO:0000303" key="2">
    <source>
    </source>
</evidence>
<evidence type="ECO:0000305" key="3"/>
<evidence type="ECO:0000305" key="4">
    <source>
    </source>
</evidence>
<organism>
    <name type="scientific">Amolops loloensis</name>
    <name type="common">Lolokou Sucker Frog</name>
    <name type="synonym">Staurois loloensis</name>
    <dbReference type="NCBI Taxonomy" id="318551"/>
    <lineage>
        <taxon>Eukaryota</taxon>
        <taxon>Metazoa</taxon>
        <taxon>Chordata</taxon>
        <taxon>Craniata</taxon>
        <taxon>Vertebrata</taxon>
        <taxon>Euteleostomi</taxon>
        <taxon>Amphibia</taxon>
        <taxon>Batrachia</taxon>
        <taxon>Anura</taxon>
        <taxon>Neobatrachia</taxon>
        <taxon>Ranoidea</taxon>
        <taxon>Ranidae</taxon>
        <taxon>Amolops</taxon>
    </lineage>
</organism>
<feature type="peptide" id="PRO_0000450000" description="Temporin" evidence="1">
    <location>
        <begin position="1"/>
        <end position="16"/>
    </location>
</feature>
<feature type="modified residue" description="Leucine amide" evidence="1">
    <location>
        <position position="16"/>
    </location>
</feature>
<comment type="function">
    <text evidence="1">Probable antimicrobial peptide that can stimulate insulin release in INS-1 cells in a dose-dependent manner and without increasing the influx of calcium.</text>
</comment>
<comment type="subcellular location">
    <subcellularLocation>
        <location evidence="1">Secreted</location>
    </subcellularLocation>
</comment>
<comment type="tissue specificity">
    <text evidence="4">Expressed by the skin glands.</text>
</comment>
<comment type="mass spectrometry" mass="1615.5" method="FAB" evidence="1"/>
<comment type="pharmaceutical">
    <text evidence="4">promising candidate to treat diabetes.</text>
</comment>
<comment type="similarity">
    <text evidence="3">Belongs to the frog skin active peptide (FSAP) family. Temporin subfamily.</text>
</comment>
<accession>P0DTU0</accession>
<name>TPAMO_AMOLO</name>
<dbReference type="GO" id="GO:0005576">
    <property type="term" value="C:extracellular region"/>
    <property type="evidence" value="ECO:0007669"/>
    <property type="project" value="UniProtKB-SubCell"/>
</dbReference>
<dbReference type="GO" id="GO:0045087">
    <property type="term" value="P:innate immune response"/>
    <property type="evidence" value="ECO:0007669"/>
    <property type="project" value="UniProtKB-KW"/>
</dbReference>
<protein>
    <recommendedName>
        <fullName evidence="3">Temporin</fullName>
    </recommendedName>
    <alternativeName>
        <fullName evidence="2">Amolopin</fullName>
    </alternativeName>
</protein>
<sequence length="16" mass="1616">FLPIVGKSLSGLSGKL</sequence>
<reference key="1">
    <citation type="journal article" date="2014" name="Nat. Prod. Bioprospect.">
        <title>A novel insulinotropic peptide from the skin secretions of Amolops loloensis frog.</title>
        <authorList>
            <person name="Mo G.X."/>
            <person name="Bai X.W."/>
            <person name="Li Z.J."/>
            <person name="Yan X.W."/>
            <person name="He X.Q."/>
            <person name="Rong M.Q."/>
        </authorList>
    </citation>
    <scope>PROTEIN SEQUENCE</scope>
    <scope>SUBCELLULAR LOCATION</scope>
    <scope>MASS SPECTROMETRY</scope>
    <scope>AMIDATION AT LEU-16</scope>
    <scope>PHARMACEUTICAL</scope>
    <source>
        <tissue>Skin secretion</tissue>
    </source>
</reference>
<proteinExistence type="evidence at protein level"/>